<protein>
    <recommendedName>
        <fullName evidence="2">Serine/threonine-protein kinase dkf-2</fullName>
        <ecNumber>2.7.11.13</ecNumber>
    </recommendedName>
    <alternativeName>
        <fullName evidence="2">D kinase family-2</fullName>
    </alternativeName>
</protein>
<evidence type="ECO:0000250" key="1"/>
<evidence type="ECO:0000250" key="2">
    <source>
        <dbReference type="UniProtKB" id="O45818"/>
    </source>
</evidence>
<evidence type="ECO:0000250" key="3">
    <source>
        <dbReference type="UniProtKB" id="P28523"/>
    </source>
</evidence>
<evidence type="ECO:0000255" key="4"/>
<evidence type="ECO:0000255" key="5">
    <source>
        <dbReference type="PROSITE-ProRule" id="PRU00159"/>
    </source>
</evidence>
<evidence type="ECO:0000255" key="6">
    <source>
        <dbReference type="PROSITE-ProRule" id="PRU00226"/>
    </source>
</evidence>
<evidence type="ECO:0000255" key="7">
    <source>
        <dbReference type="PROSITE-ProRule" id="PRU10027"/>
    </source>
</evidence>
<evidence type="ECO:0000256" key="8">
    <source>
        <dbReference type="SAM" id="MobiDB-lite"/>
    </source>
</evidence>
<evidence type="ECO:0000312" key="9">
    <source>
        <dbReference type="EMBL" id="CAP34861.2"/>
    </source>
</evidence>
<keyword id="KW-0067">ATP-binding</keyword>
<keyword id="KW-0963">Cytoplasm</keyword>
<keyword id="KW-0391">Immunity</keyword>
<keyword id="KW-0399">Innate immunity</keyword>
<keyword id="KW-0418">Kinase</keyword>
<keyword id="KW-0460">Magnesium</keyword>
<keyword id="KW-0472">Membrane</keyword>
<keyword id="KW-0479">Metal-binding</keyword>
<keyword id="KW-0547">Nucleotide-binding</keyword>
<keyword id="KW-0597">Phosphoprotein</keyword>
<keyword id="KW-1185">Reference proteome</keyword>
<keyword id="KW-0677">Repeat</keyword>
<keyword id="KW-0723">Serine/threonine-protein kinase</keyword>
<keyword id="KW-0808">Transferase</keyword>
<keyword id="KW-0832">Ubl conjugation</keyword>
<keyword id="KW-0862">Zinc</keyword>
<keyword id="KW-0863">Zinc-finger</keyword>
<feature type="chain" id="PRO_0000385353" description="Serine/threonine-protein kinase dkf-2">
    <location>
        <begin position="1"/>
        <end position="1191"/>
    </location>
</feature>
<feature type="domain" description="PH" evidence="4">
    <location>
        <begin position="632"/>
        <end position="713"/>
    </location>
</feature>
<feature type="domain" description="Protein kinase" evidence="5">
    <location>
        <begin position="891"/>
        <end position="1147"/>
    </location>
</feature>
<feature type="zinc finger region" description="Phorbol-ester/DAG-type 1" evidence="6">
    <location>
        <begin position="314"/>
        <end position="364"/>
    </location>
</feature>
<feature type="zinc finger region" description="Phorbol-ester/DAG-type 2" evidence="6">
    <location>
        <begin position="466"/>
        <end position="531"/>
    </location>
</feature>
<feature type="region of interest" description="Disordered" evidence="8">
    <location>
        <begin position="11"/>
        <end position="48"/>
    </location>
</feature>
<feature type="region of interest" description="Disordered" evidence="8">
    <location>
        <begin position="108"/>
        <end position="155"/>
    </location>
</feature>
<feature type="region of interest" description="Disordered" evidence="8">
    <location>
        <begin position="549"/>
        <end position="594"/>
    </location>
</feature>
<feature type="region of interest" description="Disordered" evidence="8">
    <location>
        <begin position="730"/>
        <end position="786"/>
    </location>
</feature>
<feature type="compositionally biased region" description="Basic and acidic residues" evidence="8">
    <location>
        <begin position="123"/>
        <end position="139"/>
    </location>
</feature>
<feature type="compositionally biased region" description="Low complexity" evidence="8">
    <location>
        <begin position="140"/>
        <end position="150"/>
    </location>
</feature>
<feature type="compositionally biased region" description="Low complexity" evidence="8">
    <location>
        <begin position="738"/>
        <end position="751"/>
    </location>
</feature>
<feature type="compositionally biased region" description="Polar residues" evidence="8">
    <location>
        <begin position="756"/>
        <end position="765"/>
    </location>
</feature>
<feature type="compositionally biased region" description="Low complexity" evidence="8">
    <location>
        <begin position="773"/>
        <end position="786"/>
    </location>
</feature>
<feature type="active site" description="Proton acceptor" evidence="3 5 7">
    <location>
        <position position="1014"/>
    </location>
</feature>
<feature type="binding site" evidence="3 5">
    <location>
        <begin position="897"/>
        <end position="905"/>
    </location>
    <ligand>
        <name>ATP</name>
        <dbReference type="ChEBI" id="CHEBI:30616"/>
    </ligand>
</feature>
<feature type="binding site" evidence="5">
    <location>
        <position position="920"/>
    </location>
    <ligand>
        <name>ATP</name>
        <dbReference type="ChEBI" id="CHEBI:30616"/>
    </ligand>
</feature>
<feature type="modified residue" description="Phosphoserine" evidence="1">
    <location>
        <position position="1046"/>
    </location>
</feature>
<feature type="modified residue" description="Phosphoserine" evidence="1">
    <location>
        <position position="1050"/>
    </location>
</feature>
<name>DKF2_CAEBR</name>
<sequence length="1191" mass="132978">MDANDFPRLFYTSMPSSSTSNHRIDRLSSSSSSTFRRDDFRRHSTTTSSEKFSTISIGESVKLEEENGEIPEKFVQEEDTVVKTEETRVSDCDFSLTFYTAHVTSSSMLSRGDSSSINNKTFTPDDHYSNPSDKRREVPSIRSTSSNSSSFGGHVAFVDEPSEENQRQQQQYQQHQFQLPTLLVTSTPSTVFDQNDDDVFTSPYHPPNRQYSSSSEMSGLSFQLQSGIHKKSIAVEGNEIALRDLRNEAFQFVKEIYPEKKCGSLEDYILLYKHDLRSINILQLITTSSDVTDGTLVEIVIGSCPQNERIVVHPHTLFVHSYKVPTFCDFCGELLFGLVKQGLKCFGCGLNYHKRCASKIPNNCNGSKQRRPSAIPLSPSNSNILNLNERRQSRRDSCLEALDAARPSSTLGGAATPNIFITSDDCGDPVGGNFLQMPRKDRSCSWSGRPLWMEIAEATRVKIQVPHTFQVHSYKLPTVCQHCKKLLKGLLRQGMQCRGENETEKLQNGAVAKYCKYNCHKKCSEHVAKDCSGNTKASQFFLGTADDGVSEDRDDDLSLRSGSGGHKKAQNTPSAPLQGSEGSGSPGGAVVSFAQGLSNAPDDDVISSESANIPLMRVVMSKKQTKRKNNKLLKEGWIVHYTDQQNMRKKHYWRLDTKGITMYQDENTTRYYKEIPLNEILGVMTSSPEKSSEYLFEIRTGACVYFVYSSLTDEELYNIIHASPCIARKPSTVSSTDSGYLGSSGASSSCVRSREGSTVSSTITVDRTRRGGSTTSTENSEAESESSYSSFASIASTASKYLGRAADCLVLMTKRNGWSDAGSPADEKSSGSLDAQSWTTAIQSALMPVTPQSSVVGGKRVDKLKVPTEGETGHLGAKIQTEQEFSQLYQIFAEEVLGSGQFGTVYGGIHRRNGQHVAVKLIDKLKFPPNKEDLLRAEVQILEQVDHPGVVHFMQMLETTDRIFVVMEKLKGDMLEMILSSEKGRLSERTTQFLVAQILEALRYLHHQNIVHCDLKPENILLNSNSDFPQVKLCDFGFARIIGEKSFRRSVVGTPAYLAPEVLRNKGFNRSLDMWSVGVIVYVSLSGTFPFNEDEDINDQIQNAEFMYPPSPWKEISENAIEFINGLLQVKMSKRYTVAKAQSHIWMQNYTIWSDLRVLEKAVGQRFVTHESDDSRWHAYEKEHNVTPVYV</sequence>
<organism>
    <name type="scientific">Caenorhabditis briggsae</name>
    <dbReference type="NCBI Taxonomy" id="6238"/>
    <lineage>
        <taxon>Eukaryota</taxon>
        <taxon>Metazoa</taxon>
        <taxon>Ecdysozoa</taxon>
        <taxon>Nematoda</taxon>
        <taxon>Chromadorea</taxon>
        <taxon>Rhabditida</taxon>
        <taxon>Rhabditina</taxon>
        <taxon>Rhabditomorpha</taxon>
        <taxon>Rhabditoidea</taxon>
        <taxon>Rhabditidae</taxon>
        <taxon>Peloderinae</taxon>
        <taxon>Caenorhabditis</taxon>
    </lineage>
</organism>
<comment type="function">
    <text evidence="1">Converts transient diacylglycerol (DAG) signals into prolonged physiological effects, downstream of PKC. Acts in the intestine to regulate both innate immunity by promoting activation of pmk-1 and also stress response and life span by acting as an upstream, negative regulator of the daf-16 transcription factor (By similarity).</text>
</comment>
<comment type="catalytic activity">
    <reaction evidence="2">
        <text>L-seryl-[protein] + ATP = O-phospho-L-seryl-[protein] + ADP + H(+)</text>
        <dbReference type="Rhea" id="RHEA:17989"/>
        <dbReference type="Rhea" id="RHEA-COMP:9863"/>
        <dbReference type="Rhea" id="RHEA-COMP:11604"/>
        <dbReference type="ChEBI" id="CHEBI:15378"/>
        <dbReference type="ChEBI" id="CHEBI:29999"/>
        <dbReference type="ChEBI" id="CHEBI:30616"/>
        <dbReference type="ChEBI" id="CHEBI:83421"/>
        <dbReference type="ChEBI" id="CHEBI:456216"/>
        <dbReference type="EC" id="2.7.11.13"/>
    </reaction>
</comment>
<comment type="catalytic activity">
    <reaction evidence="2">
        <text>L-threonyl-[protein] + ATP = O-phospho-L-threonyl-[protein] + ADP + H(+)</text>
        <dbReference type="Rhea" id="RHEA:46608"/>
        <dbReference type="Rhea" id="RHEA-COMP:11060"/>
        <dbReference type="Rhea" id="RHEA-COMP:11605"/>
        <dbReference type="ChEBI" id="CHEBI:15378"/>
        <dbReference type="ChEBI" id="CHEBI:30013"/>
        <dbReference type="ChEBI" id="CHEBI:30616"/>
        <dbReference type="ChEBI" id="CHEBI:61977"/>
        <dbReference type="ChEBI" id="CHEBI:456216"/>
        <dbReference type="EC" id="2.7.11.13"/>
    </reaction>
</comment>
<comment type="cofactor">
    <cofactor evidence="2">
        <name>Mg(2+)</name>
        <dbReference type="ChEBI" id="CHEBI:18420"/>
    </cofactor>
</comment>
<comment type="activity regulation">
    <text evidence="1">Activated by DAG and phorbol esters. Phorbol-ester/DAG-type domain 1 binds phorbol ester with low affinity. Phorbol-ester/DAG-type domain 2 binds phorbol ester with high affinity and targets the kinase to the cell periphery, enabling phosphorylation and activation by colocalized tpa-1. Both domains 1 and 2 appear to bind DAG with equal affinity so may contribute equally to translocation and activation (By similarity).</text>
</comment>
<comment type="subcellular location">
    <subcellularLocation>
        <location evidence="2">Cytoplasm</location>
    </subcellularLocation>
    <subcellularLocation>
        <location evidence="2">Membrane</location>
    </subcellularLocation>
    <text evidence="2">Translocation to the cell membrane is required for kinase activation.</text>
</comment>
<comment type="PTM">
    <text evidence="2">Phosphorylation on Ser-1046 is the dominant regulator of catalysis, phosphorylation on Ser-1050 has a lesser effect. Prolonged phosphorylation results in ubiquitination and degradation (By similarity).</text>
</comment>
<comment type="similarity">
    <text evidence="4">Belongs to the protein kinase superfamily. CAMK Ser/Thr protein kinase family. PKD subfamily.</text>
</comment>
<reference evidence="9" key="1">
    <citation type="journal article" date="2003" name="PLoS Biol.">
        <title>The genome sequence of Caenorhabditis briggsae: a platform for comparative genomics.</title>
        <authorList>
            <person name="Stein L.D."/>
            <person name="Bao Z."/>
            <person name="Blasiar D."/>
            <person name="Blumenthal T."/>
            <person name="Brent M.R."/>
            <person name="Chen N."/>
            <person name="Chinwalla A."/>
            <person name="Clarke L."/>
            <person name="Clee C."/>
            <person name="Coghlan A."/>
            <person name="Coulson A."/>
            <person name="D'Eustachio P."/>
            <person name="Fitch D.H.A."/>
            <person name="Fulton L.A."/>
            <person name="Fulton R.E."/>
            <person name="Griffiths-Jones S."/>
            <person name="Harris T.W."/>
            <person name="Hillier L.W."/>
            <person name="Kamath R."/>
            <person name="Kuwabara P.E."/>
            <person name="Mardis E.R."/>
            <person name="Marra M.A."/>
            <person name="Miner T.L."/>
            <person name="Minx P."/>
            <person name="Mullikin J.C."/>
            <person name="Plumb R.W."/>
            <person name="Rogers J."/>
            <person name="Schein J.E."/>
            <person name="Sohrmann M."/>
            <person name="Spieth J."/>
            <person name="Stajich J.E."/>
            <person name="Wei C."/>
            <person name="Willey D."/>
            <person name="Wilson R.K."/>
            <person name="Durbin R.M."/>
            <person name="Waterston R.H."/>
        </authorList>
    </citation>
    <scope>NUCLEOTIDE SEQUENCE [LARGE SCALE GENOMIC DNA]</scope>
    <source>
        <strain evidence="9">AF16</strain>
    </source>
</reference>
<accession>A8XQD5</accession>
<dbReference type="EC" id="2.7.11.13"/>
<dbReference type="EMBL" id="HE601529">
    <property type="protein sequence ID" value="CAP34861.2"/>
    <property type="molecule type" value="Genomic_DNA"/>
</dbReference>
<dbReference type="SMR" id="A8XQD5"/>
<dbReference type="FunCoup" id="A8XQD5">
    <property type="interactions" value="1801"/>
</dbReference>
<dbReference type="STRING" id="6238.A8XQD5"/>
<dbReference type="WormBase" id="CBG17105a">
    <property type="protein sequence ID" value="CBP46891"/>
    <property type="gene ID" value="WBGene00036856"/>
    <property type="gene designation" value="Cbr-dkf-2"/>
</dbReference>
<dbReference type="eggNOG" id="KOG4236">
    <property type="taxonomic scope" value="Eukaryota"/>
</dbReference>
<dbReference type="HOGENOM" id="CLU_009772_1_0_1"/>
<dbReference type="InParanoid" id="A8XQD5"/>
<dbReference type="OMA" id="QNICHCD"/>
<dbReference type="Proteomes" id="UP000008549">
    <property type="component" value="Unassembled WGS sequence"/>
</dbReference>
<dbReference type="GO" id="GO:0005829">
    <property type="term" value="C:cytosol"/>
    <property type="evidence" value="ECO:0000318"/>
    <property type="project" value="GO_Central"/>
</dbReference>
<dbReference type="GO" id="GO:0016020">
    <property type="term" value="C:membrane"/>
    <property type="evidence" value="ECO:0007669"/>
    <property type="project" value="UniProtKB-SubCell"/>
</dbReference>
<dbReference type="GO" id="GO:0005524">
    <property type="term" value="F:ATP binding"/>
    <property type="evidence" value="ECO:0007669"/>
    <property type="project" value="UniProtKB-KW"/>
</dbReference>
<dbReference type="GO" id="GO:0004697">
    <property type="term" value="F:diacylglycerol-dependent serine/threonine kinase activity"/>
    <property type="evidence" value="ECO:0007669"/>
    <property type="project" value="UniProtKB-EC"/>
</dbReference>
<dbReference type="GO" id="GO:0106310">
    <property type="term" value="F:protein serine kinase activity"/>
    <property type="evidence" value="ECO:0007669"/>
    <property type="project" value="RHEA"/>
</dbReference>
<dbReference type="GO" id="GO:0004674">
    <property type="term" value="F:protein serine/threonine kinase activity"/>
    <property type="evidence" value="ECO:0000318"/>
    <property type="project" value="GO_Central"/>
</dbReference>
<dbReference type="GO" id="GO:0008270">
    <property type="term" value="F:zinc ion binding"/>
    <property type="evidence" value="ECO:0007669"/>
    <property type="project" value="UniProtKB-KW"/>
</dbReference>
<dbReference type="GO" id="GO:0045087">
    <property type="term" value="P:innate immune response"/>
    <property type="evidence" value="ECO:0007669"/>
    <property type="project" value="UniProtKB-KW"/>
</dbReference>
<dbReference type="GO" id="GO:0035556">
    <property type="term" value="P:intracellular signal transduction"/>
    <property type="evidence" value="ECO:0000318"/>
    <property type="project" value="GO_Central"/>
</dbReference>
<dbReference type="GO" id="GO:0007200">
    <property type="term" value="P:phospholipase C-activating G protein-coupled receptor signaling pathway"/>
    <property type="evidence" value="ECO:0000318"/>
    <property type="project" value="GO_Central"/>
</dbReference>
<dbReference type="CDD" id="cd20795">
    <property type="entry name" value="C1_PKD_rpt1"/>
    <property type="match status" value="1"/>
</dbReference>
<dbReference type="CDD" id="cd20796">
    <property type="entry name" value="C1_PKD_rpt2"/>
    <property type="match status" value="1"/>
</dbReference>
<dbReference type="CDD" id="cd01239">
    <property type="entry name" value="PH_PKD"/>
    <property type="match status" value="1"/>
</dbReference>
<dbReference type="CDD" id="cd14082">
    <property type="entry name" value="STKc_PKD"/>
    <property type="match status" value="1"/>
</dbReference>
<dbReference type="FunFam" id="1.10.510.10:FF:000151">
    <property type="entry name" value="Serine/threonine-protein kinase"/>
    <property type="match status" value="1"/>
</dbReference>
<dbReference type="FunFam" id="3.30.60.20:FF:000019">
    <property type="entry name" value="Serine/threonine-protein kinase"/>
    <property type="match status" value="1"/>
</dbReference>
<dbReference type="FunFam" id="2.30.29.30:FF:000699">
    <property type="entry name" value="Serine/threonine-protein kinase dkf-2"/>
    <property type="match status" value="1"/>
</dbReference>
<dbReference type="FunFam" id="3.30.60.20:FF:000123">
    <property type="entry name" value="Serine/threonine-protein kinase dkf-2"/>
    <property type="match status" value="1"/>
</dbReference>
<dbReference type="Gene3D" id="3.30.60.20">
    <property type="match status" value="2"/>
</dbReference>
<dbReference type="Gene3D" id="2.30.29.30">
    <property type="entry name" value="Pleckstrin-homology domain (PH domain)/Phosphotyrosine-binding domain (PTB)"/>
    <property type="match status" value="1"/>
</dbReference>
<dbReference type="Gene3D" id="1.10.510.10">
    <property type="entry name" value="Transferase(Phosphotransferase) domain 1"/>
    <property type="match status" value="1"/>
</dbReference>
<dbReference type="InterPro" id="IPR046349">
    <property type="entry name" value="C1-like_sf"/>
</dbReference>
<dbReference type="InterPro" id="IPR011009">
    <property type="entry name" value="Kinase-like_dom_sf"/>
</dbReference>
<dbReference type="InterPro" id="IPR002219">
    <property type="entry name" value="PE/DAG-bd"/>
</dbReference>
<dbReference type="InterPro" id="IPR011993">
    <property type="entry name" value="PH-like_dom_sf"/>
</dbReference>
<dbReference type="InterPro" id="IPR001849">
    <property type="entry name" value="PH_domain"/>
</dbReference>
<dbReference type="InterPro" id="IPR000719">
    <property type="entry name" value="Prot_kinase_dom"/>
</dbReference>
<dbReference type="InterPro" id="IPR017441">
    <property type="entry name" value="Protein_kinase_ATP_BS"/>
</dbReference>
<dbReference type="InterPro" id="IPR008271">
    <property type="entry name" value="Ser/Thr_kinase_AS"/>
</dbReference>
<dbReference type="PANTHER" id="PTHR22968">
    <property type="entry name" value="PROTEIN KINASE C, MU"/>
    <property type="match status" value="1"/>
</dbReference>
<dbReference type="PANTHER" id="PTHR22968:SF24">
    <property type="entry name" value="SERINE_THREONINE-PROTEIN KINASE"/>
    <property type="match status" value="1"/>
</dbReference>
<dbReference type="Pfam" id="PF00130">
    <property type="entry name" value="C1_1"/>
    <property type="match status" value="2"/>
</dbReference>
<dbReference type="Pfam" id="PF00069">
    <property type="entry name" value="Pkinase"/>
    <property type="match status" value="1"/>
</dbReference>
<dbReference type="SMART" id="SM00109">
    <property type="entry name" value="C1"/>
    <property type="match status" value="2"/>
</dbReference>
<dbReference type="SMART" id="SM00233">
    <property type="entry name" value="PH"/>
    <property type="match status" value="1"/>
</dbReference>
<dbReference type="SMART" id="SM00220">
    <property type="entry name" value="S_TKc"/>
    <property type="match status" value="1"/>
</dbReference>
<dbReference type="SUPFAM" id="SSF57889">
    <property type="entry name" value="Cysteine-rich domain"/>
    <property type="match status" value="2"/>
</dbReference>
<dbReference type="SUPFAM" id="SSF50729">
    <property type="entry name" value="PH domain-like"/>
    <property type="match status" value="1"/>
</dbReference>
<dbReference type="SUPFAM" id="SSF56112">
    <property type="entry name" value="Protein kinase-like (PK-like)"/>
    <property type="match status" value="1"/>
</dbReference>
<dbReference type="PROSITE" id="PS00107">
    <property type="entry name" value="PROTEIN_KINASE_ATP"/>
    <property type="match status" value="1"/>
</dbReference>
<dbReference type="PROSITE" id="PS50011">
    <property type="entry name" value="PROTEIN_KINASE_DOM"/>
    <property type="match status" value="1"/>
</dbReference>
<dbReference type="PROSITE" id="PS00108">
    <property type="entry name" value="PROTEIN_KINASE_ST"/>
    <property type="match status" value="1"/>
</dbReference>
<dbReference type="PROSITE" id="PS00479">
    <property type="entry name" value="ZF_DAG_PE_1"/>
    <property type="match status" value="1"/>
</dbReference>
<dbReference type="PROSITE" id="PS50081">
    <property type="entry name" value="ZF_DAG_PE_2"/>
    <property type="match status" value="2"/>
</dbReference>
<gene>
    <name evidence="9" type="primary">dkf-2</name>
    <name type="ORF">CBG17105</name>
</gene>
<proteinExistence type="inferred from homology"/>